<dbReference type="EMBL" id="CP000088">
    <property type="protein sequence ID" value="AAZ54044.1"/>
    <property type="molecule type" value="Genomic_DNA"/>
</dbReference>
<dbReference type="RefSeq" id="WP_011290453.1">
    <property type="nucleotide sequence ID" value="NC_007333.1"/>
</dbReference>
<dbReference type="SMR" id="Q47U20"/>
<dbReference type="STRING" id="269800.Tfu_0004"/>
<dbReference type="KEGG" id="tfu:Tfu_0004"/>
<dbReference type="eggNOG" id="COG1195">
    <property type="taxonomic scope" value="Bacteria"/>
</dbReference>
<dbReference type="HOGENOM" id="CLU_040267_1_1_11"/>
<dbReference type="OrthoDB" id="9803889at2"/>
<dbReference type="GO" id="GO:0005737">
    <property type="term" value="C:cytoplasm"/>
    <property type="evidence" value="ECO:0007669"/>
    <property type="project" value="UniProtKB-SubCell"/>
</dbReference>
<dbReference type="GO" id="GO:0005524">
    <property type="term" value="F:ATP binding"/>
    <property type="evidence" value="ECO:0007669"/>
    <property type="project" value="UniProtKB-UniRule"/>
</dbReference>
<dbReference type="GO" id="GO:0003697">
    <property type="term" value="F:single-stranded DNA binding"/>
    <property type="evidence" value="ECO:0007669"/>
    <property type="project" value="UniProtKB-UniRule"/>
</dbReference>
<dbReference type="GO" id="GO:0006260">
    <property type="term" value="P:DNA replication"/>
    <property type="evidence" value="ECO:0007669"/>
    <property type="project" value="UniProtKB-UniRule"/>
</dbReference>
<dbReference type="GO" id="GO:0000731">
    <property type="term" value="P:DNA synthesis involved in DNA repair"/>
    <property type="evidence" value="ECO:0007669"/>
    <property type="project" value="TreeGrafter"/>
</dbReference>
<dbReference type="GO" id="GO:0006302">
    <property type="term" value="P:double-strand break repair"/>
    <property type="evidence" value="ECO:0007669"/>
    <property type="project" value="TreeGrafter"/>
</dbReference>
<dbReference type="GO" id="GO:0009432">
    <property type="term" value="P:SOS response"/>
    <property type="evidence" value="ECO:0007669"/>
    <property type="project" value="UniProtKB-UniRule"/>
</dbReference>
<dbReference type="CDD" id="cd03242">
    <property type="entry name" value="ABC_RecF"/>
    <property type="match status" value="1"/>
</dbReference>
<dbReference type="Gene3D" id="3.40.50.300">
    <property type="entry name" value="P-loop containing nucleotide triphosphate hydrolases"/>
    <property type="match status" value="1"/>
</dbReference>
<dbReference type="Gene3D" id="1.20.1050.90">
    <property type="entry name" value="RecF/RecN/SMC, N-terminal domain"/>
    <property type="match status" value="1"/>
</dbReference>
<dbReference type="HAMAP" id="MF_00365">
    <property type="entry name" value="RecF"/>
    <property type="match status" value="1"/>
</dbReference>
<dbReference type="InterPro" id="IPR001238">
    <property type="entry name" value="DNA-binding_RecF"/>
</dbReference>
<dbReference type="InterPro" id="IPR018078">
    <property type="entry name" value="DNA-binding_RecF_CS"/>
</dbReference>
<dbReference type="InterPro" id="IPR027417">
    <property type="entry name" value="P-loop_NTPase"/>
</dbReference>
<dbReference type="InterPro" id="IPR003395">
    <property type="entry name" value="RecF/RecN/SMC_N"/>
</dbReference>
<dbReference type="InterPro" id="IPR042174">
    <property type="entry name" value="RecF_2"/>
</dbReference>
<dbReference type="NCBIfam" id="TIGR00611">
    <property type="entry name" value="recf"/>
    <property type="match status" value="1"/>
</dbReference>
<dbReference type="PANTHER" id="PTHR32182">
    <property type="entry name" value="DNA REPLICATION AND REPAIR PROTEIN RECF"/>
    <property type="match status" value="1"/>
</dbReference>
<dbReference type="PANTHER" id="PTHR32182:SF0">
    <property type="entry name" value="DNA REPLICATION AND REPAIR PROTEIN RECF"/>
    <property type="match status" value="1"/>
</dbReference>
<dbReference type="Pfam" id="PF02463">
    <property type="entry name" value="SMC_N"/>
    <property type="match status" value="1"/>
</dbReference>
<dbReference type="SUPFAM" id="SSF52540">
    <property type="entry name" value="P-loop containing nucleoside triphosphate hydrolases"/>
    <property type="match status" value="1"/>
</dbReference>
<dbReference type="PROSITE" id="PS00617">
    <property type="entry name" value="RECF_1"/>
    <property type="match status" value="1"/>
</dbReference>
<dbReference type="PROSITE" id="PS00618">
    <property type="entry name" value="RECF_2"/>
    <property type="match status" value="1"/>
</dbReference>
<comment type="function">
    <text evidence="1">The RecF protein is involved in DNA metabolism; it is required for DNA replication and normal SOS inducibility. RecF binds preferentially to single-stranded, linear DNA. It also seems to bind ATP.</text>
</comment>
<comment type="subcellular location">
    <subcellularLocation>
        <location evidence="1">Cytoplasm</location>
    </subcellularLocation>
</comment>
<comment type="similarity">
    <text evidence="1">Belongs to the RecF family.</text>
</comment>
<protein>
    <recommendedName>
        <fullName evidence="1">DNA replication and repair protein RecF</fullName>
    </recommendedName>
</protein>
<organism>
    <name type="scientific">Thermobifida fusca (strain YX)</name>
    <dbReference type="NCBI Taxonomy" id="269800"/>
    <lineage>
        <taxon>Bacteria</taxon>
        <taxon>Bacillati</taxon>
        <taxon>Actinomycetota</taxon>
        <taxon>Actinomycetes</taxon>
        <taxon>Streptosporangiales</taxon>
        <taxon>Nocardiopsidaceae</taxon>
        <taxon>Thermobifida</taxon>
    </lineage>
</organism>
<evidence type="ECO:0000255" key="1">
    <source>
        <dbReference type="HAMAP-Rule" id="MF_00365"/>
    </source>
</evidence>
<name>RECF_THEFY</name>
<keyword id="KW-0067">ATP-binding</keyword>
<keyword id="KW-0963">Cytoplasm</keyword>
<keyword id="KW-0227">DNA damage</keyword>
<keyword id="KW-0234">DNA repair</keyword>
<keyword id="KW-0235">DNA replication</keyword>
<keyword id="KW-0238">DNA-binding</keyword>
<keyword id="KW-0547">Nucleotide-binding</keyword>
<keyword id="KW-0742">SOS response</keyword>
<accession>Q47U20</accession>
<feature type="chain" id="PRO_0000236159" description="DNA replication and repair protein RecF">
    <location>
        <begin position="1"/>
        <end position="377"/>
    </location>
</feature>
<feature type="binding site" evidence="1">
    <location>
        <begin position="30"/>
        <end position="37"/>
    </location>
    <ligand>
        <name>ATP</name>
        <dbReference type="ChEBI" id="CHEBI:30616"/>
    </ligand>
</feature>
<reference key="1">
    <citation type="journal article" date="2007" name="J. Bacteriol.">
        <title>Genome sequence and analysis of the soil cellulolytic actinomycete Thermobifida fusca YX.</title>
        <authorList>
            <person name="Lykidis A."/>
            <person name="Mavromatis K."/>
            <person name="Ivanova N."/>
            <person name="Anderson I."/>
            <person name="Land M."/>
            <person name="DiBartolo G."/>
            <person name="Martinez M."/>
            <person name="Lapidus A."/>
            <person name="Lucas S."/>
            <person name="Copeland A."/>
            <person name="Richardson P."/>
            <person name="Wilson D.B."/>
            <person name="Kyrpides N."/>
        </authorList>
    </citation>
    <scope>NUCLEOTIDE SEQUENCE [LARGE SCALE GENOMIC DNA]</scope>
    <source>
        <strain>YX</strain>
    </source>
</reference>
<sequence>MHVSHLQLADYRSYEAAYLELEPGVSTFIGPNGQGKTNLVEAIGYVATHSSHRVAHDAPLVRRGAQRAVIRAAVVRHGQTALIELEINPGRANRARLNRSPNTRMRDVLGILHTVLFAPEDLALVKGDPGERRRFLDELLTARAPRYAGVRSDYERVLKQRNALLKSAAAQNLHHRGGRDLPTLDVWDEHLAQIGAELLAARLALVAELQPLAAKAYGELTATQDPISLRYRCSATDEELDTTNRPQLVEILRAALLRARPDELRRGVSLVGPHRDDLQLWLNDLPAKGYASQGESWSYALALRLAGFELLRADGDDPVLLLDDVFAELDAERRRRLASYVRTAEQVLVTAAVPDDVPQELSGARFRVTGGSVERER</sequence>
<proteinExistence type="inferred from homology"/>
<gene>
    <name evidence="1" type="primary">recF</name>
    <name type="ordered locus">Tfu_0004</name>
</gene>